<sequence>MEANGIENLTNPNQEREFIRRHHKHELVDNQCSSTLVKHINAPVHIVWSLVRRFDQPQKYKPFISRCVVKGNMEIGTVREVDVKSGLPATRSTERLELLDDNEHILSIRIVGGDHRLKNYSSIISLHPETIEGRIGTLVIESFVVDVPEGNTKDETCYFVEALIKCNLKSLADISERLAVQDTTESRV</sequence>
<reference key="1">
    <citation type="submission" date="1999-04" db="EMBL/GenBank/DDBJ databases">
        <title>Structural analysis of Arabidopsis thaliana chromosome 5. XI.</title>
        <authorList>
            <person name="Kaneko T."/>
            <person name="Katoh T."/>
            <person name="Asamizu E."/>
            <person name="Sato S."/>
            <person name="Nakamura Y."/>
            <person name="Kotani H."/>
            <person name="Tabata S."/>
        </authorList>
    </citation>
    <scope>NUCLEOTIDE SEQUENCE [LARGE SCALE GENOMIC DNA]</scope>
    <source>
        <strain>cv. Columbia</strain>
    </source>
</reference>
<reference key="2">
    <citation type="journal article" date="2017" name="Plant J.">
        <title>Araport11: a complete reannotation of the Arabidopsis thaliana reference genome.</title>
        <authorList>
            <person name="Cheng C.Y."/>
            <person name="Krishnakumar V."/>
            <person name="Chan A.P."/>
            <person name="Thibaud-Nissen F."/>
            <person name="Schobel S."/>
            <person name="Town C.D."/>
        </authorList>
    </citation>
    <scope>GENOME REANNOTATION</scope>
    <source>
        <strain>cv. Columbia</strain>
    </source>
</reference>
<reference key="3">
    <citation type="journal article" date="2003" name="Science">
        <title>Empirical analysis of transcriptional activity in the Arabidopsis genome.</title>
        <authorList>
            <person name="Yamada K."/>
            <person name="Lim J."/>
            <person name="Dale J.M."/>
            <person name="Chen H."/>
            <person name="Shinn P."/>
            <person name="Palm C.J."/>
            <person name="Southwick A.M."/>
            <person name="Wu H.C."/>
            <person name="Kim C.J."/>
            <person name="Nguyen M."/>
            <person name="Pham P.K."/>
            <person name="Cheuk R.F."/>
            <person name="Karlin-Newmann G."/>
            <person name="Liu S.X."/>
            <person name="Lam B."/>
            <person name="Sakano H."/>
            <person name="Wu T."/>
            <person name="Yu G."/>
            <person name="Miranda M."/>
            <person name="Quach H.L."/>
            <person name="Tripp M."/>
            <person name="Chang C.H."/>
            <person name="Lee J.M."/>
            <person name="Toriumi M.J."/>
            <person name="Chan M.M."/>
            <person name="Tang C.C."/>
            <person name="Onodera C.S."/>
            <person name="Deng J.M."/>
            <person name="Akiyama K."/>
            <person name="Ansari Y."/>
            <person name="Arakawa T."/>
            <person name="Banh J."/>
            <person name="Banno F."/>
            <person name="Bowser L."/>
            <person name="Brooks S.Y."/>
            <person name="Carninci P."/>
            <person name="Chao Q."/>
            <person name="Choy N."/>
            <person name="Enju A."/>
            <person name="Goldsmith A.D."/>
            <person name="Gurjal M."/>
            <person name="Hansen N.F."/>
            <person name="Hayashizaki Y."/>
            <person name="Johnson-Hopson C."/>
            <person name="Hsuan V.W."/>
            <person name="Iida K."/>
            <person name="Karnes M."/>
            <person name="Khan S."/>
            <person name="Koesema E."/>
            <person name="Ishida J."/>
            <person name="Jiang P.X."/>
            <person name="Jones T."/>
            <person name="Kawai J."/>
            <person name="Kamiya A."/>
            <person name="Meyers C."/>
            <person name="Nakajima M."/>
            <person name="Narusaka M."/>
            <person name="Seki M."/>
            <person name="Sakurai T."/>
            <person name="Satou M."/>
            <person name="Tamse R."/>
            <person name="Vaysberg M."/>
            <person name="Wallender E.K."/>
            <person name="Wong C."/>
            <person name="Yamamura Y."/>
            <person name="Yuan S."/>
            <person name="Shinozaki K."/>
            <person name="Davis R.W."/>
            <person name="Theologis A."/>
            <person name="Ecker J.R."/>
        </authorList>
    </citation>
    <scope>NUCLEOTIDE SEQUENCE [LARGE SCALE MRNA]</scope>
    <source>
        <strain>cv. Columbia</strain>
    </source>
</reference>
<reference key="4">
    <citation type="submission" date="2006-07" db="EMBL/GenBank/DDBJ databases">
        <title>Large-scale analysis of RIKEN Arabidopsis full-length (RAFL) cDNAs.</title>
        <authorList>
            <person name="Totoki Y."/>
            <person name="Seki M."/>
            <person name="Ishida J."/>
            <person name="Nakajima M."/>
            <person name="Enju A."/>
            <person name="Kamiya A."/>
            <person name="Narusaka M."/>
            <person name="Shin-i T."/>
            <person name="Nakagawa M."/>
            <person name="Sakamoto N."/>
            <person name="Oishi K."/>
            <person name="Kohara Y."/>
            <person name="Kobayashi M."/>
            <person name="Toyoda A."/>
            <person name="Sakaki Y."/>
            <person name="Sakurai T."/>
            <person name="Iida K."/>
            <person name="Akiyama K."/>
            <person name="Satou M."/>
            <person name="Toyoda T."/>
            <person name="Konagaya A."/>
            <person name="Carninci P."/>
            <person name="Kawai J."/>
            <person name="Hayashizaki Y."/>
            <person name="Shinozaki K."/>
        </authorList>
    </citation>
    <scope>NUCLEOTIDE SEQUENCE [LARGE SCALE MRNA]</scope>
    <source>
        <strain>cv. Columbia</strain>
    </source>
</reference>
<reference key="5">
    <citation type="journal article" date="2009" name="Plant J.">
        <title>Modulation of drought resistance by the abscisic acid receptor PYL5 through inhibition of clade A PP2Cs.</title>
        <authorList>
            <person name="Santiago J."/>
            <person name="Rodrigues A."/>
            <person name="Saez A."/>
            <person name="Rubio S."/>
            <person name="Antoni R."/>
            <person name="Dupeux F."/>
            <person name="Park S.-Y."/>
            <person name="Marquez J.A."/>
            <person name="Cutler S.R."/>
            <person name="Rodriguez P.L."/>
        </authorList>
    </citation>
    <scope>FUNCTION</scope>
    <scope>INTERACTION WITH HAB1</scope>
</reference>
<reference key="6">
    <citation type="journal article" date="2009" name="Science">
        <title>Regulators of PP2C phosphatase activity function as abscisic acid sensors.</title>
        <authorList>
            <person name="Ma Y."/>
            <person name="Szostkiewicz I."/>
            <person name="Korte A."/>
            <person name="Moes D."/>
            <person name="Yang Y."/>
            <person name="Christmann A."/>
            <person name="Grill E."/>
        </authorList>
    </citation>
    <scope>FUNCTION</scope>
    <scope>GENE FAMILY</scope>
</reference>
<reference key="7">
    <citation type="journal article" date="2009" name="Science">
        <title>Abscisic acid inhibits type 2C protein phosphatases via the PYR/PYL family of START proteins.</title>
        <authorList>
            <person name="Park S.-Y."/>
            <person name="Fung P."/>
            <person name="Nishimura N."/>
            <person name="Jensen D.R."/>
            <person name="Fujii H."/>
            <person name="Zhao Y."/>
            <person name="Lumba S."/>
            <person name="Santiago J."/>
            <person name="Rodrigues A."/>
            <person name="Chow T.F."/>
            <person name="Alfred S.E."/>
            <person name="Bonetta D."/>
            <person name="Finkelstein R."/>
            <person name="Provart N.J."/>
            <person name="Desveaux D."/>
            <person name="Rodriguez P.L."/>
            <person name="McCourt P."/>
            <person name="Zhu J.-K."/>
            <person name="Schroeder J.I."/>
            <person name="Volkman B.F."/>
            <person name="Cutler S.R."/>
        </authorList>
    </citation>
    <scope>GENE FAMILY</scope>
    <scope>NOMENCLATURE</scope>
</reference>
<reference key="8">
    <citation type="journal article" date="2010" name="Plant J.">
        <title>Closely related receptor complexes differ in their ABA selectivity and sensitivity.</title>
        <authorList>
            <person name="Szostkiewicz I."/>
            <person name="Richter K."/>
            <person name="Kepka M."/>
            <person name="Demmel S."/>
            <person name="Ma Y."/>
            <person name="Korte A."/>
            <person name="Assaad F.F."/>
            <person name="Christmann A."/>
            <person name="Grill E."/>
        </authorList>
    </citation>
    <scope>FUNCTION</scope>
    <scope>INTERACTION WITH ABI1 AND ABI2</scope>
</reference>
<reference key="9">
    <citation type="journal article" date="2010" name="Plant J.">
        <title>PYR/PYL/RCAR family members are major in-vivo ABI1 protein phosphatase 2C-interacting proteins in Arabidopsis.</title>
        <authorList>
            <person name="Nishimura N."/>
            <person name="Sarkeshik A."/>
            <person name="Nito K."/>
            <person name="Park S.-Y."/>
            <person name="Wang A."/>
            <person name="Carvalho P.C."/>
            <person name="Lee S."/>
            <person name="Caddell D.F."/>
            <person name="Cutler S.R."/>
            <person name="Chory J."/>
            <person name="Yates J.R."/>
            <person name="Schroeder J.I."/>
        </authorList>
    </citation>
    <scope>INTERACTION WITH ABI1</scope>
    <scope>IDENTIFICATION BY MASS SPECTROMETRY</scope>
</reference>
<reference key="10">
    <citation type="journal article" date="2010" name="Plant Physiol.">
        <title>The nuclear interactor PYL8/RCAR3 of Fagus sylvatica FsPP2C1 is a positive regulator of abscisic acid signaling in seeds and stress.</title>
        <authorList>
            <person name="Saavedra X."/>
            <person name="Modrego A."/>
            <person name="Rodriguez D."/>
            <person name="Gonzalez-Garcia M.P."/>
            <person name="Sanz L."/>
            <person name="Nicolas G."/>
            <person name="Lorenzo O."/>
        </authorList>
    </citation>
    <scope>FUNCTION</scope>
    <scope>SUBCELLULAR LOCATION</scope>
</reference>
<reference key="11">
    <citation type="journal article" date="2011" name="Mol. Cell">
        <title>The molecular basis of ABA-independent inhibition of PP2Cs by a subclass of PYL proteins.</title>
        <authorList>
            <person name="Hao Q."/>
            <person name="Yin P."/>
            <person name="Li W."/>
            <person name="Wang L."/>
            <person name="Yan C."/>
            <person name="Lin Z."/>
            <person name="Wu J.Z."/>
            <person name="Wang J."/>
            <person name="Yan S.F."/>
            <person name="Yan N."/>
        </authorList>
    </citation>
    <scope>FUNCTION</scope>
    <scope>MONOMER</scope>
    <scope>GENE FAMILY</scope>
</reference>
<reference key="12">
    <citation type="journal article" date="2012" name="Plant Sci.">
        <title>Functional roles of the protein phosphatase 2C, AtAIP1, in abscisic acid signaling and sugar tolerance in Arabidopsis.</title>
        <authorList>
            <person name="Lim C.W."/>
            <person name="Kim J.H."/>
            <person name="Baek W."/>
            <person name="Kim B.S."/>
            <person name="Lee S.C."/>
        </authorList>
    </citation>
    <scope>INTERACTION WITH AIP1</scope>
    <scope>SUBCELLULAR LOCATION</scope>
</reference>
<reference key="13">
    <citation type="journal article" date="2013" name="PLoS ONE">
        <title>Structural insights into the abscisic acid stereospecificity by the ABA receptors PYR/PYL/RCAR.</title>
        <authorList>
            <person name="Zhang X."/>
            <person name="Jiang L."/>
            <person name="Wang G."/>
            <person name="Yu L."/>
            <person name="Zhang Q."/>
            <person name="Xin Q."/>
            <person name="Wu W."/>
            <person name="Gong Z."/>
            <person name="Chen Z."/>
        </authorList>
    </citation>
    <scope>FUNCTION</scope>
    <scope>GENE FAMILY</scope>
</reference>
<reference key="14">
    <citation type="journal article" date="2014" name="Plant Cell">
        <title>Targeted degradation of abscisic acid receptors is mediated by the ubiquitin ligase substrate adaptor DDA1 in Arabidopsis.</title>
        <authorList>
            <person name="Irigoyen M.L."/>
            <person name="Iniesto E."/>
            <person name="Rodriguez L."/>
            <person name="Puga M.I."/>
            <person name="Yanagawa Y."/>
            <person name="Pick E."/>
            <person name="Strickland E."/>
            <person name="Paz-Ares J."/>
            <person name="Wei N."/>
            <person name="De Jaeger G."/>
            <person name="Rodriguez P.L."/>
            <person name="Deng X.W."/>
            <person name="Rubio V."/>
        </authorList>
    </citation>
    <scope>INTERACTION WITH DDA1</scope>
    <scope>SUBCELLULAR LOCATION</scope>
    <scope>UBIQUITINATION</scope>
</reference>
<reference key="15">
    <citation type="journal article" date="2014" name="Plant Cell">
        <title>C2-domain abscisic acid-related proteins mediate the interaction of PYR/PYL/RCAR abscisic acid receptors with the plasma membrane and regulate abscisic acid sensitivity in Arabidopsis.</title>
        <authorList>
            <person name="Rodriguez L."/>
            <person name="Gonzalez-Guzman M."/>
            <person name="Diaz M."/>
            <person name="Rodrigues A."/>
            <person name="Izquierdo-Garcia A.C."/>
            <person name="Peirats-Llobet M."/>
            <person name="Fernandez M.A."/>
            <person name="Antoni R."/>
            <person name="Fernandez D."/>
            <person name="Marquez J.A."/>
            <person name="Mulet J.M."/>
            <person name="Albert A."/>
            <person name="Rodriguez P.L."/>
        </authorList>
    </citation>
    <scope>INTERACTION WITH CAR1 AND CAR4</scope>
    <scope>SUBCELLULAR LOCATION</scope>
</reference>
<reference key="16">
    <citation type="journal article" date="2014" name="Sci. Signal.">
        <title>The ABA receptor PYL8 promotes lateral root growth by enhancing MYB77-dependent transcription of auxin-responsive genes.</title>
        <authorList>
            <person name="Zhao Y."/>
            <person name="Xing L."/>
            <person name="Wang X."/>
            <person name="Hou Y.J."/>
            <person name="Gao J."/>
            <person name="Wang P."/>
            <person name="Duan C.G."/>
            <person name="Zhu X."/>
            <person name="Zhu J.K."/>
        </authorList>
    </citation>
    <scope>FUNCTION</scope>
    <scope>INTERACTION WITH MYB44; MYB73 AND MYB77</scope>
    <scope>INDUCTION</scope>
    <scope>DISRUPTION PHENOTYPE</scope>
</reference>
<reference key="17">
    <citation type="journal article" date="2018" name="Cell Discov.">
        <title>CARK1 mediates ABA signaling by phosphorylation of ABA receptors.</title>
        <authorList>
            <person name="Zhang L."/>
            <person name="Li X."/>
            <person name="Li D."/>
            <person name="Sun Y."/>
            <person name="Li Y."/>
            <person name="Luo Q."/>
            <person name="Liu Z."/>
            <person name="Wang J."/>
            <person name="Li X."/>
            <person name="Zhang H."/>
            <person name="Lou Z."/>
            <person name="Yang Y."/>
        </authorList>
    </citation>
    <scope>INTERACTION WITH CARK1 AND ABI1</scope>
    <scope>PHOSPHORYLATION AT THR-77</scope>
    <scope>MUTAGENESIS OF THR-77</scope>
    <scope>PTM</scope>
    <scope>SUBCELLULAR LOCATION</scope>
</reference>
<protein>
    <recommendedName>
        <fullName evidence="16 18">Abscisic acid receptor PYL8</fullName>
    </recommendedName>
    <alternativeName>
        <fullName evidence="19">ABI1-binding protein 1</fullName>
    </alternativeName>
    <alternativeName>
        <fullName evidence="16 18">PYR1-like protein 8</fullName>
    </alternativeName>
    <alternativeName>
        <fullName evidence="17">Regulatory components of ABA receptor 3</fullName>
    </alternativeName>
</protein>
<feature type="chain" id="PRO_0000391743" description="Abscisic acid receptor PYL8">
    <location>
        <begin position="1"/>
        <end position="188"/>
    </location>
</feature>
<feature type="region of interest" description="START-like">
    <location>
        <begin position="25"/>
        <end position="176"/>
    </location>
</feature>
<feature type="short sequence motif" description="Gate loop" evidence="3">
    <location>
        <begin position="85"/>
        <end position="89"/>
    </location>
</feature>
<feature type="short sequence motif" description="Latch loop" evidence="3">
    <location>
        <begin position="115"/>
        <end position="117"/>
    </location>
</feature>
<feature type="binding site" evidence="1">
    <location>
        <position position="61"/>
    </location>
    <ligand>
        <name>abscisate</name>
        <dbReference type="ChEBI" id="CHEBI:62432"/>
    </ligand>
</feature>
<feature type="binding site" evidence="1">
    <location>
        <begin position="89"/>
        <end position="94"/>
    </location>
    <ligand>
        <name>abscisate</name>
        <dbReference type="ChEBI" id="CHEBI:62432"/>
    </ligand>
</feature>
<feature type="binding site" evidence="1">
    <location>
        <begin position="116"/>
        <end position="122"/>
    </location>
    <ligand>
        <name>abscisate</name>
        <dbReference type="ChEBI" id="CHEBI:62432"/>
    </ligand>
</feature>
<feature type="binding site" evidence="1">
    <location>
        <position position="141"/>
    </location>
    <ligand>
        <name>abscisate</name>
        <dbReference type="ChEBI" id="CHEBI:62432"/>
    </ligand>
</feature>
<feature type="site" description="Involved in ABA binding" evidence="2">
    <location>
        <position position="62"/>
    </location>
</feature>
<feature type="site" description="Involved in interactions with PP2Cs" evidence="1">
    <location>
        <position position="88"/>
    </location>
</feature>
<feature type="site" description="Involved in ABA binding" evidence="2">
    <location>
        <position position="108"/>
    </location>
</feature>
<feature type="site" description="Involved in interactions with PP2Cs" evidence="1">
    <location>
        <position position="152"/>
    </location>
</feature>
<feature type="site" description="Involved in ABA binding" evidence="2">
    <location>
        <position position="160"/>
    </location>
</feature>
<feature type="site" description="Involved in ABA binding" evidence="2">
    <location>
        <position position="163"/>
    </location>
</feature>
<feature type="modified residue" description="Phosphothreonine; by CARK1" evidence="15">
    <location>
        <position position="77"/>
    </location>
</feature>
<feature type="disulfide bond" description="Reversible" evidence="2">
    <location>
        <begin position="32"/>
        <end position="157"/>
    </location>
</feature>
<feature type="mutagenesis site" description="Reduced CARK1-mediated phosphorylation and lower affinity for ABI1." evidence="15">
    <original>T</original>
    <variation>A</variation>
    <location>
        <position position="77"/>
    </location>
</feature>
<feature type="mutagenesis site" description="Phosphomimetic; increased affinity for ABI1 and constitutive abscisic acid (ABA) sensitivity." evidence="15">
    <original>T</original>
    <variation>D</variation>
    <location>
        <position position="77"/>
    </location>
</feature>
<feature type="sequence conflict" description="In Ref. 4; BAF00266." evidence="20" ref="4">
    <original>I</original>
    <variation>F</variation>
    <location>
        <position position="6"/>
    </location>
</feature>
<organism>
    <name type="scientific">Arabidopsis thaliana</name>
    <name type="common">Mouse-ear cress</name>
    <dbReference type="NCBI Taxonomy" id="3702"/>
    <lineage>
        <taxon>Eukaryota</taxon>
        <taxon>Viridiplantae</taxon>
        <taxon>Streptophyta</taxon>
        <taxon>Embryophyta</taxon>
        <taxon>Tracheophyta</taxon>
        <taxon>Spermatophyta</taxon>
        <taxon>Magnoliopsida</taxon>
        <taxon>eudicotyledons</taxon>
        <taxon>Gunneridae</taxon>
        <taxon>Pentapetalae</taxon>
        <taxon>rosids</taxon>
        <taxon>malvids</taxon>
        <taxon>Brassicales</taxon>
        <taxon>Brassicaceae</taxon>
        <taxon>Camelineae</taxon>
        <taxon>Arabidopsis</taxon>
    </lineage>
</organism>
<name>PYL8_ARATH</name>
<accession>Q9FGM1</accession>
<accession>Q0WRI3</accession>
<dbReference type="EMBL" id="AB025622">
    <property type="protein sequence ID" value="BAB08419.1"/>
    <property type="molecule type" value="Genomic_DNA"/>
</dbReference>
<dbReference type="EMBL" id="CP002688">
    <property type="protein sequence ID" value="AED96316.1"/>
    <property type="molecule type" value="Genomic_DNA"/>
</dbReference>
<dbReference type="EMBL" id="BT003112">
    <property type="protein sequence ID" value="AAO24544.1"/>
    <property type="molecule type" value="mRNA"/>
</dbReference>
<dbReference type="EMBL" id="AK228324">
    <property type="protein sequence ID" value="BAF00266.1"/>
    <property type="molecule type" value="mRNA"/>
</dbReference>
<dbReference type="RefSeq" id="NP_200128.1">
    <molecule id="Q9FGM1-1"/>
    <property type="nucleotide sequence ID" value="NM_124695.4"/>
</dbReference>
<dbReference type="SMR" id="Q9FGM1"/>
<dbReference type="BioGRID" id="20642">
    <property type="interactions" value="27"/>
</dbReference>
<dbReference type="FunCoup" id="Q9FGM1">
    <property type="interactions" value="613"/>
</dbReference>
<dbReference type="IntAct" id="Q9FGM1">
    <property type="interactions" value="19"/>
</dbReference>
<dbReference type="MINT" id="Q9FGM1"/>
<dbReference type="STRING" id="3702.Q9FGM1"/>
<dbReference type="iPTMnet" id="Q9FGM1"/>
<dbReference type="PaxDb" id="3702-AT5G53160.2"/>
<dbReference type="ProteomicsDB" id="226013">
    <molecule id="Q9FGM1-1"/>
</dbReference>
<dbReference type="EnsemblPlants" id="AT5G53160.2">
    <molecule id="Q9FGM1-1"/>
    <property type="protein sequence ID" value="AT5G53160.2"/>
    <property type="gene ID" value="AT5G53160"/>
</dbReference>
<dbReference type="GeneID" id="835397"/>
<dbReference type="Gramene" id="AT5G53160.2">
    <molecule id="Q9FGM1-1"/>
    <property type="protein sequence ID" value="AT5G53160.2"/>
    <property type="gene ID" value="AT5G53160"/>
</dbReference>
<dbReference type="KEGG" id="ath:AT5G53160"/>
<dbReference type="Araport" id="AT5G53160"/>
<dbReference type="TAIR" id="AT5G53160">
    <property type="gene designation" value="RCAR3"/>
</dbReference>
<dbReference type="eggNOG" id="ENOG502QPYH">
    <property type="taxonomic scope" value="Eukaryota"/>
</dbReference>
<dbReference type="HOGENOM" id="CLU_077517_0_1_1"/>
<dbReference type="InParanoid" id="Q9FGM1"/>
<dbReference type="OMA" id="NPEREYI"/>
<dbReference type="OrthoDB" id="4436220at2759"/>
<dbReference type="PhylomeDB" id="Q9FGM1"/>
<dbReference type="PRO" id="PR:Q9FGM1"/>
<dbReference type="Proteomes" id="UP000006548">
    <property type="component" value="Chromosome 5"/>
</dbReference>
<dbReference type="ExpressionAtlas" id="Q9FGM1">
    <property type="expression patterns" value="baseline and differential"/>
</dbReference>
<dbReference type="GO" id="GO:0005737">
    <property type="term" value="C:cytoplasm"/>
    <property type="evidence" value="ECO:0000314"/>
    <property type="project" value="UniProtKB"/>
</dbReference>
<dbReference type="GO" id="GO:0005829">
    <property type="term" value="C:cytosol"/>
    <property type="evidence" value="ECO:0000314"/>
    <property type="project" value="UniProtKB"/>
</dbReference>
<dbReference type="GO" id="GO:0005634">
    <property type="term" value="C:nucleus"/>
    <property type="evidence" value="ECO:0000314"/>
    <property type="project" value="UniProtKB"/>
</dbReference>
<dbReference type="GO" id="GO:0005886">
    <property type="term" value="C:plasma membrane"/>
    <property type="evidence" value="ECO:0007669"/>
    <property type="project" value="UniProtKB-SubCell"/>
</dbReference>
<dbReference type="GO" id="GO:0010427">
    <property type="term" value="F:abscisic acid binding"/>
    <property type="evidence" value="ECO:0000250"/>
    <property type="project" value="UniProtKB"/>
</dbReference>
<dbReference type="GO" id="GO:0042803">
    <property type="term" value="F:protein homodimerization activity"/>
    <property type="evidence" value="ECO:0000250"/>
    <property type="project" value="UniProtKB"/>
</dbReference>
<dbReference type="GO" id="GO:0004864">
    <property type="term" value="F:protein phosphatase inhibitor activity"/>
    <property type="evidence" value="ECO:0000314"/>
    <property type="project" value="UniProtKB"/>
</dbReference>
<dbReference type="GO" id="GO:0038023">
    <property type="term" value="F:signaling receptor activity"/>
    <property type="evidence" value="ECO:0000314"/>
    <property type="project" value="UniProtKB"/>
</dbReference>
<dbReference type="GO" id="GO:0009738">
    <property type="term" value="P:abscisic acid-activated signaling pathway"/>
    <property type="evidence" value="ECO:0000314"/>
    <property type="project" value="UniProtKB"/>
</dbReference>
<dbReference type="GO" id="GO:0009789">
    <property type="term" value="P:positive regulation of abscisic acid-activated signaling pathway"/>
    <property type="evidence" value="ECO:0000315"/>
    <property type="project" value="TAIR"/>
</dbReference>
<dbReference type="GO" id="GO:0009737">
    <property type="term" value="P:response to abscisic acid"/>
    <property type="evidence" value="ECO:0000314"/>
    <property type="project" value="TAIR"/>
</dbReference>
<dbReference type="CDD" id="cd07821">
    <property type="entry name" value="PYR_PYL_RCAR_like"/>
    <property type="match status" value="1"/>
</dbReference>
<dbReference type="FunFam" id="3.30.530.20:FF:000013">
    <property type="entry name" value="Abscisic acid receptor PYL9"/>
    <property type="match status" value="1"/>
</dbReference>
<dbReference type="Gene3D" id="3.30.530.20">
    <property type="match status" value="1"/>
</dbReference>
<dbReference type="InterPro" id="IPR050279">
    <property type="entry name" value="Plant_def-hormone_signal"/>
</dbReference>
<dbReference type="InterPro" id="IPR019587">
    <property type="entry name" value="Polyketide_cyclase/dehydratase"/>
</dbReference>
<dbReference type="InterPro" id="IPR023393">
    <property type="entry name" value="START-like_dom_sf"/>
</dbReference>
<dbReference type="PANTHER" id="PTHR31213:SF4">
    <property type="entry name" value="ABSCISIC ACID RECEPTOR PYL8"/>
    <property type="match status" value="1"/>
</dbReference>
<dbReference type="PANTHER" id="PTHR31213">
    <property type="entry name" value="OS08G0374000 PROTEIN-RELATED"/>
    <property type="match status" value="1"/>
</dbReference>
<dbReference type="Pfam" id="PF10604">
    <property type="entry name" value="Polyketide_cyc2"/>
    <property type="match status" value="1"/>
</dbReference>
<dbReference type="SUPFAM" id="SSF55961">
    <property type="entry name" value="Bet v1-like"/>
    <property type="match status" value="1"/>
</dbReference>
<gene>
    <name evidence="16 18" type="primary">PYL8</name>
    <name evidence="19" type="synonym">ABIP1</name>
    <name evidence="17" type="synonym">RCAR3</name>
    <name evidence="21" type="ordered locus">At5g53160</name>
    <name evidence="22" type="ORF">MFH8.10</name>
</gene>
<proteinExistence type="evidence at protein level"/>
<evidence type="ECO:0000250" key="1">
    <source>
        <dbReference type="UniProtKB" id="O49686"/>
    </source>
</evidence>
<evidence type="ECO:0000250" key="2">
    <source>
        <dbReference type="UniProtKB" id="Q84MC7"/>
    </source>
</evidence>
<evidence type="ECO:0000250" key="3">
    <source>
        <dbReference type="UniProtKB" id="Q8VZS8"/>
    </source>
</evidence>
<evidence type="ECO:0000269" key="4">
    <source>
    </source>
</evidence>
<evidence type="ECO:0000269" key="5">
    <source>
    </source>
</evidence>
<evidence type="ECO:0000269" key="6">
    <source>
    </source>
</evidence>
<evidence type="ECO:0000269" key="7">
    <source>
    </source>
</evidence>
<evidence type="ECO:0000269" key="8">
    <source>
    </source>
</evidence>
<evidence type="ECO:0000269" key="9">
    <source>
    </source>
</evidence>
<evidence type="ECO:0000269" key="10">
    <source>
    </source>
</evidence>
<evidence type="ECO:0000269" key="11">
    <source>
    </source>
</evidence>
<evidence type="ECO:0000269" key="12">
    <source>
    </source>
</evidence>
<evidence type="ECO:0000269" key="13">
    <source>
    </source>
</evidence>
<evidence type="ECO:0000269" key="14">
    <source>
    </source>
</evidence>
<evidence type="ECO:0000269" key="15">
    <source>
    </source>
</evidence>
<evidence type="ECO:0000303" key="16">
    <source>
    </source>
</evidence>
<evidence type="ECO:0000303" key="17">
    <source>
    </source>
</evidence>
<evidence type="ECO:0000303" key="18">
    <source>
    </source>
</evidence>
<evidence type="ECO:0000303" key="19">
    <source>
    </source>
</evidence>
<evidence type="ECO:0000305" key="20"/>
<evidence type="ECO:0000312" key="21">
    <source>
        <dbReference type="Araport" id="AT5G53160"/>
    </source>
</evidence>
<evidence type="ECO:0000312" key="22">
    <source>
        <dbReference type="EMBL" id="BAB08419.1"/>
    </source>
</evidence>
<keyword id="KW-0938">Abscisic acid signaling pathway</keyword>
<keyword id="KW-0025">Alternative splicing</keyword>
<keyword id="KW-1003">Cell membrane</keyword>
<keyword id="KW-0963">Cytoplasm</keyword>
<keyword id="KW-1015">Disulfide bond</keyword>
<keyword id="KW-0472">Membrane</keyword>
<keyword id="KW-0539">Nucleus</keyword>
<keyword id="KW-0597">Phosphoprotein</keyword>
<keyword id="KW-0650">Protein phosphatase inhibitor</keyword>
<keyword id="KW-0675">Receptor</keyword>
<keyword id="KW-1185">Reference proteome</keyword>
<keyword id="KW-0832">Ubl conjugation</keyword>
<comment type="function">
    <text evidence="4 5 6 8 9 11 13">Receptor for abscisic acid (ABA) required for ABA-mediated responses such as stomatal closure and germination inhibition. Inhibits the activity of group-A protein phosphatases type 2C (PP2Cs) in an ABA-independent manner but more efficiently when activated by ABA. Confers enhanced sensitivity to ABA (PubMed:19407143, PubMed:19624469, PubMed:19769575, PubMed:19889877, PubMed:21658606, PubMed:23844015). Can be activated by both (-)-ABA and (+)-ABA (PubMed:23844015). Mediates crosstalk between ABA and auxin signaling to regulate lateral root growth. Required for lateral root growth suppression by ABA. In response to auxin, promotes lateral root growth by enhancing MYB77-dependent transcription of the auxin-responsive gene IAA19. Enhances the abilities of MYB44 and MYB73 to activate IAA19 gene (PubMed:24894996).</text>
</comment>
<comment type="subunit">
    <text evidence="1 5 6 7 9 10 12 13 14 15">Monomer (PubMed:21658606). Homodimer. Binds ABA on one subunit only (By similarity). interacts with ABI1 and HAB1, and possibly with other PP2Cs (PubMed:19624469, PubMed:19769575, PubMed:19874541). Binds to CARs protein in an ABA-independent manner, both at the plasma membrane and in the nucleus. Interacts directly with CAR1 and CAR4 (PubMed:25465408). Interacts with MYB44, MYB73 and MYB77 in an ABA-independent manner (PubMed:24894996). Interacts with DDA1 (PubMed:24563205). Interacts with CARK1 in the cytosol (PubMed:29928509). Binds to ABI1 when phosphorylated by CARK1 (By similarity) (PubMed:19624469, PubMed:19769575, PubMed:19874541, PubMed:21658606, PubMed:24563205, PubMed:24894996, PubMed:25465408, PubMed:29928509). Interacts with AIP1 in the nucleus (PubMed:22404835).</text>
</comment>
<comment type="interaction">
    <interactant intactId="EBI-2429535">
        <id>Q9FGM1</id>
    </interactant>
    <interactant intactId="EBI-782526">
        <id>P49597</id>
        <label>ABI1</label>
    </interactant>
    <organismsDiffer>false</organismsDiffer>
    <experiments>7</experiments>
</comment>
<comment type="interaction">
    <interactant intactId="EBI-2429535">
        <id>Q9FGM1</id>
    </interactant>
    <interactant intactId="EBI-537680">
        <id>O04719</id>
        <label>ABI2</label>
    </interactant>
    <organismsDiffer>false</organismsDiffer>
    <experiments>3</experiments>
</comment>
<comment type="interaction">
    <interactant intactId="EBI-2429535">
        <id>Q9FGM1</id>
    </interactant>
    <interactant intactId="EBI-1573499">
        <id>Q9LNW3</id>
        <label>AIP1</label>
    </interactant>
    <organismsDiffer>false</organismsDiffer>
    <experiments>9</experiments>
</comment>
<comment type="interaction">
    <interactant intactId="EBI-2429535">
        <id>Q9FGM1</id>
    </interactant>
    <interactant intactId="EBI-25528701">
        <id>Q93WK5</id>
        <label>APRR7</label>
    </interactant>
    <organismsDiffer>false</organismsDiffer>
    <experiments>3</experiments>
</comment>
<comment type="interaction">
    <interactant intactId="EBI-2429535">
        <id>Q9FGM1</id>
    </interactant>
    <interactant intactId="EBI-4441103">
        <id>Q9ZW21</id>
        <label>At2g29380</label>
    </interactant>
    <organismsDiffer>false</organismsDiffer>
    <experiments>7</experiments>
</comment>
<comment type="interaction">
    <interactant intactId="EBI-2429535">
        <id>Q9FGM1</id>
    </interactant>
    <interactant intactId="EBI-25528671">
        <id>Q9SZE1</id>
        <label>At4g29120</label>
    </interactant>
    <organismsDiffer>false</organismsDiffer>
    <experiments>3</experiments>
</comment>
<comment type="interaction">
    <interactant intactId="EBI-2429535">
        <id>Q9FGM1</id>
    </interactant>
    <interactant intactId="EBI-15192637">
        <id>Q9C7T4</id>
        <label>BHLH96</label>
    </interactant>
    <organismsDiffer>false</organismsDiffer>
    <experiments>3</experiments>
</comment>
<comment type="interaction">
    <interactant intactId="EBI-2429535">
        <id>Q9FGM1</id>
    </interactant>
    <interactant intactId="EBI-2309302">
        <id>Q9CAJ0</id>
        <label>HAB1</label>
    </interactant>
    <organismsDiffer>false</organismsDiffer>
    <experiments>7</experiments>
</comment>
<comment type="interaction">
    <interactant intactId="EBI-2429535">
        <id>Q9FGM1</id>
    </interactant>
    <interactant intactId="EBI-15803614">
        <id>Q9LNP9</id>
        <label>HAB2</label>
    </interactant>
    <organismsDiffer>false</organismsDiffer>
    <experiments>5</experiments>
</comment>
<comment type="interaction">
    <interactant intactId="EBI-2429535">
        <id>Q9FGM1</id>
    </interactant>
    <interactant intactId="EBI-3946408">
        <id>Q8H174</id>
        <label>IAA31</label>
    </interactant>
    <organismsDiffer>false</organismsDiffer>
    <experiments>3</experiments>
</comment>
<comment type="interaction">
    <interactant intactId="EBI-2429535">
        <id>Q9FGM1</id>
    </interactant>
    <interactant intactId="EBI-15192813">
        <id>Q9FDW1</id>
        <label>MYB44</label>
    </interactant>
    <organismsDiffer>false</organismsDiffer>
    <experiments>5</experiments>
</comment>
<comment type="interaction">
    <interactant intactId="EBI-2429535">
        <id>Q9FGM1</id>
    </interactant>
    <interactant intactId="EBI-1238013">
        <id>O22179</id>
        <label>MYB70</label>
    </interactant>
    <organismsDiffer>false</organismsDiffer>
    <experiments>5</experiments>
</comment>
<comment type="interaction">
    <interactant intactId="EBI-2429535">
        <id>Q9FGM1</id>
    </interactant>
    <interactant intactId="EBI-25506855">
        <id>O23160</id>
        <label>MYB73</label>
    </interactant>
    <organismsDiffer>false</organismsDiffer>
    <experiments>5</experiments>
</comment>
<comment type="interaction">
    <interactant intactId="EBI-2429535">
        <id>Q9FGM1</id>
    </interactant>
    <interactant intactId="EBI-2324225">
        <id>Q9SN12</id>
        <label>MYB77</label>
    </interactant>
    <organismsDiffer>false</organismsDiffer>
    <experiments>4</experiments>
</comment>
<comment type="interaction">
    <interactant intactId="EBI-2429535">
        <id>Q9FGM1</id>
    </interactant>
    <interactant intactId="EBI-2363373">
        <id>Q9FIF5</id>
        <label>SAG113</label>
    </interactant>
    <organismsDiffer>false</organismsDiffer>
    <experiments>5</experiments>
</comment>
<comment type="interaction">
    <interactant intactId="EBI-2429535">
        <id>Q9FGM1</id>
    </interactant>
    <interactant intactId="EBI-4426144">
        <id>Q9C9L2</id>
        <label>TCP15</label>
    </interactant>
    <organismsDiffer>false</organismsDiffer>
    <experiments>3</experiments>
</comment>
<comment type="interaction">
    <interactant intactId="EBI-2429535">
        <id>Q9FGM1</id>
    </interactant>
    <interactant intactId="EBI-4426178">
        <id>Q9LT89</id>
        <label>TCP19</label>
    </interactant>
    <organismsDiffer>false</organismsDiffer>
    <experiments>3</experiments>
</comment>
<comment type="interaction">
    <interactant intactId="EBI-2429535">
        <id>Q9FGM1</id>
    </interactant>
    <interactant intactId="EBI-4426557">
        <id>Q84MB2</id>
        <label>TIFY8</label>
    </interactant>
    <organismsDiffer>false</organismsDiffer>
    <experiments>3</experiments>
</comment>
<comment type="subcellular location">
    <subcellularLocation>
        <location evidence="15">Cytoplasm</location>
        <location evidence="15">Cytosol</location>
    </subcellularLocation>
    <subcellularLocation>
        <location evidence="8 10">Cytoplasm</location>
    </subcellularLocation>
    <subcellularLocation>
        <location evidence="8 10 12 14">Nucleus</location>
    </subcellularLocation>
    <subcellularLocation>
        <location evidence="14">Cell membrane</location>
    </subcellularLocation>
    <text evidence="14">Localizes at the plasma membrane in the presence of a CAR protein (e.g. CAR1 and CAR4).</text>
</comment>
<comment type="alternative products">
    <event type="alternative splicing"/>
    <isoform>
        <id>Q9FGM1-1</id>
        <name>1</name>
        <sequence type="displayed"/>
    </isoform>
    <text>A number of isoforms are produced. According to EST sequences.</text>
</comment>
<comment type="induction">
    <text evidence="13">Down-regulated by abscisic acid (ABA).</text>
</comment>
<comment type="domain">
    <text evidence="3">Upon interaction with ABA, the 'latch' and 'gate' loops change in conformation leading to a tight dimerization and the creation a surface that enables the receptor to dock into and inhibit the PP2C active site.</text>
</comment>
<comment type="PTM">
    <text evidence="15">Phosphorylated by CARK1 especially in response to abscisic acid (ABA); this phosphorylation promotes its stability and inhibitory ability to ABI1.</text>
</comment>
<comment type="PTM">
    <text evidence="12">Ubiquitinated in DDA1- and CDD complex-dependent manner (PubMed:24563205). Ubiquitination leads to its subsequent proteasomal degradation (PubMed:24563205).</text>
</comment>
<comment type="disruption phenotype">
    <text evidence="13">No visible phenotype under normal growth conditions, but mutant seedlings exhibit enhanced sensitivity of lateral root inhibition by abscisic acid (ABA), and reduced suppression of primary root growth by ABA.</text>
</comment>
<comment type="similarity">
    <text evidence="20">Belongs to the PYR/PYL/RCAR abscisic acid intracellular receptor family.</text>
</comment>